<accession>Q4P937</accession>
<accession>A0A0D1C550</accession>
<sequence length="2251" mass="244327">MTSSLAAQLANVRSLNAERLTSSASLVKHTSYLFPPKTAAQQDLFTVHALGASGWTELSAENASLQRWSQSSLLFGDESRSMDRLMLPKEENDTIDKAVDEFLHLAAPFLLSKGASKCLEWLVRRFRVHEFSVEHVLAAFLPYHDTQQFARMLSICKLDGKPHLQFLLSVKKTASPLPAGVLHTAILAPATTTASLDLLRWISGLLANDVSYQLQVSPHRALVNFWTSTLVQICAARSRPDDNQQLAGLSKSTSNSKKSTKTRAADAQAILTILLPSAVRVAGTASLGQDAQMGGFMLLCTISQSFPLSKEAIQGVLTSLAKLLSTSHVVPAVNRALIACAFALCASPIATSDPLTTQSTSADRLIPDSLTAVLVSSTDASNCIGALAKSYDARAFLAHFIAALTARLSHAPSADLLSAILRGPAVQDNLCIQASELLLRLRLGASVGSSQAQDTAFEAHFVNDAVNEAHRNRLRVLQTVRNRKPHVFDTALHNCTRKHQSEAVIAAIWQTVQAVLAIESGIPLQDASQGKHDEQGRSDILWLSIHSADASQRCLALKQLFKDIKEGRALPQDTMVREALHARIQDSSIDVLQILYSQPAAVLNAFDARTLLTMIAEALDEGRIAVDRFTQHLSFLLNPYLKEHADANDQVARRAVWPHLLHSPSRLANASSAIKLLSQSSNTNGVLSLIASFAAKYEDPTHVNDAIARAVAAHLVSVSAEDRKDWVDFLTSTARPSQTTATASRDLALLSLIHLSDKIAGDDLVSLSETILRNVVLPSLTVLGAPTAEHLQQLSSLTLNDALTSLQHVKQLETLFKHAATEQSAILLVNHLLVQLVRRAEVPAFDTYLTSQVSPELQRAKTILTSLYSVINTAPLPTSLSKLLLRILLFKLGDSSLPFLASIWTNTSGSYTAAVRLAALRHADAYLQAQVQAISQQEARDFQVVVPLLLTALADAEAAIRLAAIACLAHILAICKYAGDLAKASKKKAKELDIFGYESFHGAATSDPMQYIDLVSLAPYLEQIIESKSAFRNDAALLPRLHGELLQIGRQDGRKEVGHKHAMVCFIVSHILCIDSLPSRLVLLQSLSRVSDAAKLEMLLPLIREVVEGNVATATNGLRNVEDRELYLELLFASYDRGCRDVVEQAASGAWPLYLKALEGRDGKRQVQKAAVRALDKAGLFATLSPIMRKESYLHLASVVADPSVPASPEVASALRELKVDSAILIAVLSELREAITSKALSGPESKRARTSLSSDETMKRTCAILAAVLESAVGSRLMCTPALLYELFEVLRVAVDLHSGLLATNGEHMMQLAMSCIEKLVGSLPKSAATIPAEIAQALRADTIVSVIKSSNNPQTFQHALLLLSKIASIAPETVLHNVMPIFTFVGSTVLQRDDAFSFSVVEKVLQSIVPALVNSFRASDAAKKSKFALLCEARAFVRIFTDAAAHVPRHRRQTFFRLLVDILGADDFAAAVAMLLVDRSAHKIVKQSRSDAEQTLQLPLAVVSPHSAMVQVRVLHQVWEEVLRIWANRDETESLSELVFLDRAGRLDKEHVDHESEPLRQIQALIMLIRQVLVSKAFADQMGKVASNQIGEELETFIRLALETVASVRSSQPTIAGLALEVLDAAMPFAPVDNVLAVVSGLVEGQDVAHRTSGFSLFASRVGAMSPTSTDRAAVAAYTPTIVKEAIEVIATSLATPPAGADAESLRQAALDALKTVSSSAQTAEHATLASALPTLIKLGKTSAESERVQRAVPWAARISVFSITRRLATKLGPRLIPHIAALVPFCLSVISRSASATVGSADAVQDESENEKGRAAAAGVNSNKAVLRTGALDTLTGLFGSVSTFMSSYVAQIIRMSISPELKKAMSSVSGSSTASERSLNLLVSTLIRKTVANQLFEATFKVWDQELAVAENDDAVERLVGISEFLGRALRQSDREAISATYKLVYRFLLRALDLGRINVAGNGKLSRASIARIETSLVSLPFMRMVLKLNEASFRPLFMRMFDWAVLDLVDGDEVDVHSEETDAIVARQVVLFKTFNALSETLRSLVSSYYAVLLDQVIELLSTWSKLAARATVAHQSMQRELWNEVMRSIQLSAKHDEGIFWNPSRVAKIIGPILDQMNLLNASWNDKKRFIEAEEFVGAVAPVVVGLLNNVNDQATLKLFNSSLLQRASATRATNSSLIRSTATQLLTHMWAAQNDQLLALVPETIAQLSELLEDDHQPIVAYANQFRSHIEAALGESLESYLT</sequence>
<keyword id="KW-0472">Membrane</keyword>
<keyword id="KW-0539">Nucleus</keyword>
<keyword id="KW-1185">Reference proteome</keyword>
<keyword id="KW-0687">Ribonucleoprotein</keyword>
<keyword id="KW-0690">Ribosome biogenesis</keyword>
<keyword id="KW-0698">rRNA processing</keyword>
<keyword id="KW-0812">Transmembrane</keyword>
<keyword id="KW-1133">Transmembrane helix</keyword>
<evidence type="ECO:0000250" key="1">
    <source>
        <dbReference type="UniProtKB" id="P42945"/>
    </source>
</evidence>
<evidence type="ECO:0000255" key="2"/>
<evidence type="ECO:0000305" key="3"/>
<protein>
    <recommendedName>
        <fullName>U3 small nucleolar RNA-associated protein 10</fullName>
    </recommendedName>
</protein>
<organism>
    <name type="scientific">Mycosarcoma maydis</name>
    <name type="common">Corn smut fungus</name>
    <name type="synonym">Ustilago maydis</name>
    <dbReference type="NCBI Taxonomy" id="5270"/>
    <lineage>
        <taxon>Eukaryota</taxon>
        <taxon>Fungi</taxon>
        <taxon>Dikarya</taxon>
        <taxon>Basidiomycota</taxon>
        <taxon>Ustilaginomycotina</taxon>
        <taxon>Ustilaginomycetes</taxon>
        <taxon>Ustilaginales</taxon>
        <taxon>Ustilaginaceae</taxon>
        <taxon>Mycosarcoma</taxon>
    </lineage>
</organism>
<gene>
    <name evidence="1" type="primary">UTP10</name>
    <name type="ORF">UMAG_03376</name>
</gene>
<dbReference type="EMBL" id="CM003147">
    <property type="protein sequence ID" value="KIS68812.1"/>
    <property type="molecule type" value="Genomic_DNA"/>
</dbReference>
<dbReference type="RefSeq" id="XP_011389758.1">
    <property type="nucleotide sequence ID" value="XM_011391456.1"/>
</dbReference>
<dbReference type="SMR" id="Q4P937"/>
<dbReference type="FunCoup" id="Q4P937">
    <property type="interactions" value="608"/>
</dbReference>
<dbReference type="STRING" id="237631.Q4P937"/>
<dbReference type="EnsemblFungi" id="KIS68812">
    <property type="protein sequence ID" value="KIS68812"/>
    <property type="gene ID" value="UMAG_03376"/>
</dbReference>
<dbReference type="GeneID" id="23563845"/>
<dbReference type="KEGG" id="uma:UMAG_03376"/>
<dbReference type="VEuPathDB" id="FungiDB:UMAG_03376"/>
<dbReference type="eggNOG" id="KOG1837">
    <property type="taxonomic scope" value="Eukaryota"/>
</dbReference>
<dbReference type="HOGENOM" id="CLU_001128_0_0_1"/>
<dbReference type="InParanoid" id="Q4P937"/>
<dbReference type="OMA" id="NDVMWKQ"/>
<dbReference type="OrthoDB" id="31183at2759"/>
<dbReference type="Proteomes" id="UP000000561">
    <property type="component" value="Chromosome 8"/>
</dbReference>
<dbReference type="GO" id="GO:0030686">
    <property type="term" value="C:90S preribosome"/>
    <property type="evidence" value="ECO:0000318"/>
    <property type="project" value="GO_Central"/>
</dbReference>
<dbReference type="GO" id="GO:0016020">
    <property type="term" value="C:membrane"/>
    <property type="evidence" value="ECO:0007669"/>
    <property type="project" value="UniProtKB-SubCell"/>
</dbReference>
<dbReference type="GO" id="GO:0032040">
    <property type="term" value="C:small-subunit processome"/>
    <property type="evidence" value="ECO:0000318"/>
    <property type="project" value="GO_Central"/>
</dbReference>
<dbReference type="GO" id="GO:0034455">
    <property type="term" value="C:t-UTP complex"/>
    <property type="evidence" value="ECO:0000318"/>
    <property type="project" value="GO_Central"/>
</dbReference>
<dbReference type="GO" id="GO:0030515">
    <property type="term" value="F:snoRNA binding"/>
    <property type="evidence" value="ECO:0000318"/>
    <property type="project" value="GO_Central"/>
</dbReference>
<dbReference type="GO" id="GO:0000462">
    <property type="term" value="P:maturation of SSU-rRNA from tricistronic rRNA transcript (SSU-rRNA, 5.8S rRNA, LSU-rRNA)"/>
    <property type="evidence" value="ECO:0000318"/>
    <property type="project" value="GO_Central"/>
</dbReference>
<dbReference type="GO" id="GO:0045943">
    <property type="term" value="P:positive regulation of transcription by RNA polymerase I"/>
    <property type="evidence" value="ECO:0000318"/>
    <property type="project" value="GO_Central"/>
</dbReference>
<dbReference type="InterPro" id="IPR016024">
    <property type="entry name" value="ARM-type_fold"/>
</dbReference>
<dbReference type="InterPro" id="IPR012954">
    <property type="entry name" value="BP28_C_dom"/>
</dbReference>
<dbReference type="InterPro" id="IPR056473">
    <property type="entry name" value="HEAT_Utp10/HEAT1"/>
</dbReference>
<dbReference type="InterPro" id="IPR022125">
    <property type="entry name" value="U3snoRNP10_N"/>
</dbReference>
<dbReference type="InterPro" id="IPR040191">
    <property type="entry name" value="UTP10"/>
</dbReference>
<dbReference type="PANTHER" id="PTHR13457">
    <property type="entry name" value="BAP28"/>
    <property type="match status" value="1"/>
</dbReference>
<dbReference type="PANTHER" id="PTHR13457:SF1">
    <property type="entry name" value="HEAT REPEAT-CONTAINING PROTEIN 1"/>
    <property type="match status" value="1"/>
</dbReference>
<dbReference type="Pfam" id="PF08146">
    <property type="entry name" value="BP28CT"/>
    <property type="match status" value="1"/>
</dbReference>
<dbReference type="Pfam" id="PF23243">
    <property type="entry name" value="HEAT_HEATR1"/>
    <property type="match status" value="1"/>
</dbReference>
<dbReference type="Pfam" id="PF12397">
    <property type="entry name" value="U3snoRNP10"/>
    <property type="match status" value="1"/>
</dbReference>
<dbReference type="SMART" id="SM01036">
    <property type="entry name" value="BP28CT"/>
    <property type="match status" value="1"/>
</dbReference>
<dbReference type="SUPFAM" id="SSF48371">
    <property type="entry name" value="ARM repeat"/>
    <property type="match status" value="1"/>
</dbReference>
<name>UTP10_MYCMD</name>
<feature type="chain" id="PRO_0000308513" description="U3 small nucleolar RNA-associated protein 10">
    <location>
        <begin position="1"/>
        <end position="2251"/>
    </location>
</feature>
<feature type="transmembrane region" description="Helical" evidence="2">
    <location>
        <begin position="962"/>
        <end position="982"/>
    </location>
</feature>
<feature type="transmembrane region" description="Helical" evidence="2">
    <location>
        <begin position="1460"/>
        <end position="1480"/>
    </location>
</feature>
<feature type="repeat" description="HEAT" evidence="2">
    <location>
        <begin position="945"/>
        <end position="983"/>
    </location>
</feature>
<reference key="1">
    <citation type="journal article" date="2006" name="Nature">
        <title>Insights from the genome of the biotrophic fungal plant pathogen Ustilago maydis.</title>
        <authorList>
            <person name="Kaemper J."/>
            <person name="Kahmann R."/>
            <person name="Boelker M."/>
            <person name="Ma L.-J."/>
            <person name="Brefort T."/>
            <person name="Saville B.J."/>
            <person name="Banuett F."/>
            <person name="Kronstad J.W."/>
            <person name="Gold S.E."/>
            <person name="Mueller O."/>
            <person name="Perlin M.H."/>
            <person name="Woesten H.A.B."/>
            <person name="de Vries R."/>
            <person name="Ruiz-Herrera J."/>
            <person name="Reynaga-Pena C.G."/>
            <person name="Snetselaar K."/>
            <person name="McCann M."/>
            <person name="Perez-Martin J."/>
            <person name="Feldbruegge M."/>
            <person name="Basse C.W."/>
            <person name="Steinberg G."/>
            <person name="Ibeas J.I."/>
            <person name="Holloman W."/>
            <person name="Guzman P."/>
            <person name="Farman M.L."/>
            <person name="Stajich J.E."/>
            <person name="Sentandreu R."/>
            <person name="Gonzalez-Prieto J.M."/>
            <person name="Kennell J.C."/>
            <person name="Molina L."/>
            <person name="Schirawski J."/>
            <person name="Mendoza-Mendoza A."/>
            <person name="Greilinger D."/>
            <person name="Muench K."/>
            <person name="Roessel N."/>
            <person name="Scherer M."/>
            <person name="Vranes M."/>
            <person name="Ladendorf O."/>
            <person name="Vincon V."/>
            <person name="Fuchs U."/>
            <person name="Sandrock B."/>
            <person name="Meng S."/>
            <person name="Ho E.C.H."/>
            <person name="Cahill M.J."/>
            <person name="Boyce K.J."/>
            <person name="Klose J."/>
            <person name="Klosterman S.J."/>
            <person name="Deelstra H.J."/>
            <person name="Ortiz-Castellanos L."/>
            <person name="Li W."/>
            <person name="Sanchez-Alonso P."/>
            <person name="Schreier P.H."/>
            <person name="Haeuser-Hahn I."/>
            <person name="Vaupel M."/>
            <person name="Koopmann E."/>
            <person name="Friedrich G."/>
            <person name="Voss H."/>
            <person name="Schlueter T."/>
            <person name="Margolis J."/>
            <person name="Platt D."/>
            <person name="Swimmer C."/>
            <person name="Gnirke A."/>
            <person name="Chen F."/>
            <person name="Vysotskaia V."/>
            <person name="Mannhaupt G."/>
            <person name="Gueldener U."/>
            <person name="Muensterkoetter M."/>
            <person name="Haase D."/>
            <person name="Oesterheld M."/>
            <person name="Mewes H.-W."/>
            <person name="Mauceli E.W."/>
            <person name="DeCaprio D."/>
            <person name="Wade C.M."/>
            <person name="Butler J."/>
            <person name="Young S.K."/>
            <person name="Jaffe D.B."/>
            <person name="Calvo S.E."/>
            <person name="Nusbaum C."/>
            <person name="Galagan J.E."/>
            <person name="Birren B.W."/>
        </authorList>
    </citation>
    <scope>NUCLEOTIDE SEQUENCE [LARGE SCALE GENOMIC DNA]</scope>
    <source>
        <strain>DSM 14603 / FGSC 9021 / UM521</strain>
    </source>
</reference>
<reference key="2">
    <citation type="submission" date="2014-09" db="EMBL/GenBank/DDBJ databases">
        <authorList>
            <person name="Gueldener U."/>
            <person name="Muensterkoetter M."/>
            <person name="Walter M.C."/>
            <person name="Mannhaupt G."/>
            <person name="Kahmann R."/>
        </authorList>
    </citation>
    <scope>GENOME REANNOTATION</scope>
    <source>
        <strain>DSM 14603 / FGSC 9021 / UM521</strain>
    </source>
</reference>
<proteinExistence type="inferred from homology"/>
<comment type="function">
    <text evidence="1">Involved in nucleolar processing of pre-18S ribosomal RNA. Involved in ribosome biosynthesis (By similarity).</text>
</comment>
<comment type="subunit">
    <text evidence="1">Component of the ribosomal small subunit (SSU) processome.</text>
</comment>
<comment type="subcellular location">
    <subcellularLocation>
        <location evidence="1 2">Nucleus</location>
        <location evidence="1 2">Nucleolus</location>
    </subcellularLocation>
    <subcellularLocation>
        <location evidence="2">Membrane</location>
        <topology evidence="2">Multi-pass membrane protein</topology>
    </subcellularLocation>
</comment>
<comment type="similarity">
    <text evidence="3">Belongs to the HEATR1/UTP10 family.</text>
</comment>